<organism>
    <name type="scientific">Anopheles gambiae</name>
    <name type="common">African malaria mosquito</name>
    <dbReference type="NCBI Taxonomy" id="7165"/>
    <lineage>
        <taxon>Eukaryota</taxon>
        <taxon>Metazoa</taxon>
        <taxon>Ecdysozoa</taxon>
        <taxon>Arthropoda</taxon>
        <taxon>Hexapoda</taxon>
        <taxon>Insecta</taxon>
        <taxon>Pterygota</taxon>
        <taxon>Neoptera</taxon>
        <taxon>Endopterygota</taxon>
        <taxon>Diptera</taxon>
        <taxon>Nematocera</taxon>
        <taxon>Culicoidea</taxon>
        <taxon>Culicidae</taxon>
        <taxon>Anophelinae</taxon>
        <taxon>Anopheles</taxon>
    </lineage>
</organism>
<proteinExistence type="inferred from homology"/>
<keyword id="KW-0004">4Fe-4S</keyword>
<keyword id="KW-0067">ATP-binding</keyword>
<keyword id="KW-0963">Cytoplasm</keyword>
<keyword id="KW-0408">Iron</keyword>
<keyword id="KW-0411">Iron-sulfur</keyword>
<keyword id="KW-0479">Metal-binding</keyword>
<keyword id="KW-0547">Nucleotide-binding</keyword>
<keyword id="KW-1185">Reference proteome</keyword>
<reference key="1">
    <citation type="journal article" date="2002" name="Science">
        <title>The genome sequence of the malaria mosquito Anopheles gambiae.</title>
        <authorList>
            <person name="Holt R.A."/>
            <person name="Subramanian G.M."/>
            <person name="Halpern A."/>
            <person name="Sutton G.G."/>
            <person name="Charlab R."/>
            <person name="Nusskern D.R."/>
            <person name="Wincker P."/>
            <person name="Clark A.G."/>
            <person name="Ribeiro J.M.C."/>
            <person name="Wides R."/>
            <person name="Salzberg S.L."/>
            <person name="Loftus B.J."/>
            <person name="Yandell M.D."/>
            <person name="Majoros W.H."/>
            <person name="Rusch D.B."/>
            <person name="Lai Z."/>
            <person name="Kraft C.L."/>
            <person name="Abril J.F."/>
            <person name="Anthouard V."/>
            <person name="Arensburger P."/>
            <person name="Atkinson P.W."/>
            <person name="Baden H."/>
            <person name="de Berardinis V."/>
            <person name="Baldwin D."/>
            <person name="Benes V."/>
            <person name="Biedler J."/>
            <person name="Blass C."/>
            <person name="Bolanos R."/>
            <person name="Boscus D."/>
            <person name="Barnstead M."/>
            <person name="Cai S."/>
            <person name="Center A."/>
            <person name="Chaturverdi K."/>
            <person name="Christophides G.K."/>
            <person name="Chrystal M.A.M."/>
            <person name="Clamp M."/>
            <person name="Cravchik A."/>
            <person name="Curwen V."/>
            <person name="Dana A."/>
            <person name="Delcher A."/>
            <person name="Dew I."/>
            <person name="Evans C.A."/>
            <person name="Flanigan M."/>
            <person name="Grundschober-Freimoser A."/>
            <person name="Friedli L."/>
            <person name="Gu Z."/>
            <person name="Guan P."/>
            <person name="Guigo R."/>
            <person name="Hillenmeyer M.E."/>
            <person name="Hladun S.L."/>
            <person name="Hogan J.R."/>
            <person name="Hong Y.S."/>
            <person name="Hoover J."/>
            <person name="Jaillon O."/>
            <person name="Ke Z."/>
            <person name="Kodira C.D."/>
            <person name="Kokoza E."/>
            <person name="Koutsos A."/>
            <person name="Letunic I."/>
            <person name="Levitsky A.A."/>
            <person name="Liang Y."/>
            <person name="Lin J.-J."/>
            <person name="Lobo N.F."/>
            <person name="Lopez J.R."/>
            <person name="Malek J.A."/>
            <person name="McIntosh T.C."/>
            <person name="Meister S."/>
            <person name="Miller J.R."/>
            <person name="Mobarry C."/>
            <person name="Mongin E."/>
            <person name="Murphy S.D."/>
            <person name="O'Brochta D.A."/>
            <person name="Pfannkoch C."/>
            <person name="Qi R."/>
            <person name="Regier M.A."/>
            <person name="Remington K."/>
            <person name="Shao H."/>
            <person name="Sharakhova M.V."/>
            <person name="Sitter C.D."/>
            <person name="Shetty J."/>
            <person name="Smith T.J."/>
            <person name="Strong R."/>
            <person name="Sun J."/>
            <person name="Thomasova D."/>
            <person name="Ton L.Q."/>
            <person name="Topalis P."/>
            <person name="Tu Z.J."/>
            <person name="Unger M.F."/>
            <person name="Walenz B."/>
            <person name="Wang A.H."/>
            <person name="Wang J."/>
            <person name="Wang M."/>
            <person name="Wang X."/>
            <person name="Woodford K.J."/>
            <person name="Wortman J.R."/>
            <person name="Wu M."/>
            <person name="Yao A."/>
            <person name="Zdobnov E.M."/>
            <person name="Zhang H."/>
            <person name="Zhao Q."/>
            <person name="Zhao S."/>
            <person name="Zhu S.C."/>
            <person name="Zhimulev I."/>
            <person name="Coluzzi M."/>
            <person name="della Torre A."/>
            <person name="Roth C.W."/>
            <person name="Louis C."/>
            <person name="Kalush F."/>
            <person name="Mural R.J."/>
            <person name="Myers E.W."/>
            <person name="Adams M.D."/>
            <person name="Smith H.O."/>
            <person name="Broder S."/>
            <person name="Gardner M.J."/>
            <person name="Fraser C.M."/>
            <person name="Birney E."/>
            <person name="Bork P."/>
            <person name="Brey P.T."/>
            <person name="Venter J.C."/>
            <person name="Weissenbach J."/>
            <person name="Kafatos F.C."/>
            <person name="Collins F.H."/>
            <person name="Hoffman S.L."/>
        </authorList>
    </citation>
    <scope>NUCLEOTIDE SEQUENCE [LARGE SCALE GENOMIC DNA]</scope>
    <source>
        <strain>PEST</strain>
    </source>
</reference>
<sequence>MSSGADVPSDAPAHCPGTQSDDAGKASACAGCPNQQLCATGPKGPDPAIALVRQKLADVRNKLLVLSGKGGVGKSTVTALLSRAMAHRNPDENFGVLDIDICGPSQPRVLGVLGEQVHQSGSGWSPVYIEDNLSLMSIGFLLGSPDDAIIWRGPKKNGMIRQFLTEVDWGQLDYLVLDTPPGTSDEHLSATTFLKGTDGSWGAVLVTTPQEVALLDVRKEISFCKKLAIPVVGVIENMSAFVCPKCTTETRIFPARTDGGGAEQMCIEMEVPYLGQLPLDPRLTKCCDEGKDFITEFPTSPAVVALEEIVTKVRQFFGDGKGERQ</sequence>
<dbReference type="EMBL" id="AAAB01008986">
    <property type="protein sequence ID" value="EAA00698.4"/>
    <property type="molecule type" value="Genomic_DNA"/>
</dbReference>
<dbReference type="RefSeq" id="XP_320535.3">
    <property type="nucleotide sequence ID" value="XM_320535.3"/>
</dbReference>
<dbReference type="SMR" id="Q7PV10"/>
<dbReference type="FunCoup" id="Q7PV10">
    <property type="interactions" value="876"/>
</dbReference>
<dbReference type="STRING" id="7165.Q7PV10"/>
<dbReference type="PaxDb" id="7165-AGAP011997-PA"/>
<dbReference type="EnsemblMetazoa" id="AGAP011997-RA">
    <property type="protein sequence ID" value="AGAP011997-PA"/>
    <property type="gene ID" value="AGAP011997"/>
</dbReference>
<dbReference type="GeneID" id="1280674"/>
<dbReference type="KEGG" id="aga:1280674"/>
<dbReference type="CTD" id="4682"/>
<dbReference type="VEuPathDB" id="VectorBase:AGAMI1_010931"/>
<dbReference type="VEuPathDB" id="VectorBase:AGAP011997"/>
<dbReference type="eggNOG" id="KOG3022">
    <property type="taxonomic scope" value="Eukaryota"/>
</dbReference>
<dbReference type="HOGENOM" id="CLU_024839_0_1_1"/>
<dbReference type="InParanoid" id="Q7PV10"/>
<dbReference type="OMA" id="VSGCPMR"/>
<dbReference type="PhylomeDB" id="Q7PV10"/>
<dbReference type="Proteomes" id="UP000007062">
    <property type="component" value="Chromosome 3L"/>
</dbReference>
<dbReference type="GO" id="GO:0005829">
    <property type="term" value="C:cytosol"/>
    <property type="evidence" value="ECO:0000250"/>
    <property type="project" value="UniProtKB"/>
</dbReference>
<dbReference type="GO" id="GO:0051539">
    <property type="term" value="F:4 iron, 4 sulfur cluster binding"/>
    <property type="evidence" value="ECO:0007669"/>
    <property type="project" value="UniProtKB-UniRule"/>
</dbReference>
<dbReference type="GO" id="GO:0005524">
    <property type="term" value="F:ATP binding"/>
    <property type="evidence" value="ECO:0007669"/>
    <property type="project" value="UniProtKB-KW"/>
</dbReference>
<dbReference type="GO" id="GO:0140663">
    <property type="term" value="F:ATP-dependent FeS chaperone activity"/>
    <property type="evidence" value="ECO:0007669"/>
    <property type="project" value="InterPro"/>
</dbReference>
<dbReference type="GO" id="GO:0051536">
    <property type="term" value="F:iron-sulfur cluster binding"/>
    <property type="evidence" value="ECO:0000250"/>
    <property type="project" value="UniProtKB"/>
</dbReference>
<dbReference type="GO" id="GO:0046872">
    <property type="term" value="F:metal ion binding"/>
    <property type="evidence" value="ECO:0007669"/>
    <property type="project" value="UniProtKB-KW"/>
</dbReference>
<dbReference type="GO" id="GO:0016226">
    <property type="term" value="P:iron-sulfur cluster assembly"/>
    <property type="evidence" value="ECO:0000250"/>
    <property type="project" value="UniProtKB"/>
</dbReference>
<dbReference type="CDD" id="cd02037">
    <property type="entry name" value="Mrp_NBP35"/>
    <property type="match status" value="1"/>
</dbReference>
<dbReference type="FunFam" id="3.40.50.300:FF:000427">
    <property type="entry name" value="Cytosolic Fe-S cluster assembly factor NUBP1"/>
    <property type="match status" value="1"/>
</dbReference>
<dbReference type="Gene3D" id="3.40.50.300">
    <property type="entry name" value="P-loop containing nucleotide triphosphate hydrolases"/>
    <property type="match status" value="1"/>
</dbReference>
<dbReference type="HAMAP" id="MF_02040">
    <property type="entry name" value="Mrp_NBP35"/>
    <property type="match status" value="1"/>
</dbReference>
<dbReference type="HAMAP" id="MF_03038">
    <property type="entry name" value="NUBP1"/>
    <property type="match status" value="1"/>
</dbReference>
<dbReference type="InterPro" id="IPR000808">
    <property type="entry name" value="Mrp-like_CS"/>
</dbReference>
<dbReference type="InterPro" id="IPR019591">
    <property type="entry name" value="Mrp/NBP35_ATP-bd"/>
</dbReference>
<dbReference type="InterPro" id="IPR028601">
    <property type="entry name" value="NUBP1/Nbp35"/>
</dbReference>
<dbReference type="InterPro" id="IPR027417">
    <property type="entry name" value="P-loop_NTPase"/>
</dbReference>
<dbReference type="InterPro" id="IPR033756">
    <property type="entry name" value="YlxH/NBP35"/>
</dbReference>
<dbReference type="PANTHER" id="PTHR23264:SF35">
    <property type="entry name" value="CYTOSOLIC FE-S CLUSTER ASSEMBLY FACTOR NUBP1"/>
    <property type="match status" value="1"/>
</dbReference>
<dbReference type="PANTHER" id="PTHR23264">
    <property type="entry name" value="NUCLEOTIDE-BINDING PROTEIN NBP35 YEAST -RELATED"/>
    <property type="match status" value="1"/>
</dbReference>
<dbReference type="Pfam" id="PF10609">
    <property type="entry name" value="ParA"/>
    <property type="match status" value="1"/>
</dbReference>
<dbReference type="SUPFAM" id="SSF52540">
    <property type="entry name" value="P-loop containing nucleoside triphosphate hydrolases"/>
    <property type="match status" value="1"/>
</dbReference>
<dbReference type="PROSITE" id="PS01215">
    <property type="entry name" value="MRP"/>
    <property type="match status" value="1"/>
</dbReference>
<gene>
    <name evidence="1" type="primary">Nubp1</name>
    <name type="ORF">AGAP011997</name>
</gene>
<protein>
    <recommendedName>
        <fullName evidence="2">Cytosolic Fe-S cluster assembly factor Nubp1 homolog</fullName>
    </recommendedName>
</protein>
<accession>Q7PV10</accession>
<comment type="function">
    <text evidence="2">Component of the cytosolic iron-sulfur (Fe/S) protein assembly (CIA) machinery. Required for maturation of extramitochondrial Fe-S proteins. The Nubp1-Nubp2 heterotetramer forms a Fe-S scaffold complex, mediating the de novo assembly of an Fe-S cluster and its transfer to target apoproteins.</text>
</comment>
<comment type="cofactor">
    <cofactor evidence="2">
        <name>[4Fe-4S] cluster</name>
        <dbReference type="ChEBI" id="CHEBI:49883"/>
    </cofactor>
    <text evidence="2">Binds 4 [4Fe-4S] clusters per heterotetramer. Contains two stable clusters in the N-termini of Nubp1 and two labile, bridging clusters between subunits of the Nubp1-Nubp2 heterotetramer.</text>
</comment>
<comment type="subunit">
    <text evidence="2">Heterotetramer of 2 Nubp1 and 2 Nubp2 chains.</text>
</comment>
<comment type="subcellular location">
    <subcellularLocation>
        <location evidence="2">Cytoplasm</location>
    </subcellularLocation>
</comment>
<comment type="similarity">
    <text evidence="2">Belongs to the Mrp/NBP35 ATP-binding proteins family. NUBP1/NBP35 subfamily.</text>
</comment>
<name>NUBP1_ANOGA</name>
<evidence type="ECO:0000250" key="1">
    <source>
        <dbReference type="UniProtKB" id="Q9VJI9"/>
    </source>
</evidence>
<evidence type="ECO:0000255" key="2">
    <source>
        <dbReference type="HAMAP-Rule" id="MF_03038"/>
    </source>
</evidence>
<evidence type="ECO:0000256" key="3">
    <source>
        <dbReference type="SAM" id="MobiDB-lite"/>
    </source>
</evidence>
<feature type="chain" id="PRO_0000382599" description="Cytosolic Fe-S cluster assembly factor Nubp1 homolog">
    <location>
        <begin position="1"/>
        <end position="325"/>
    </location>
</feature>
<feature type="region of interest" description="Disordered" evidence="3">
    <location>
        <begin position="1"/>
        <end position="26"/>
    </location>
</feature>
<feature type="binding site" evidence="2">
    <location>
        <position position="15"/>
    </location>
    <ligand>
        <name>[4Fe-4S] cluster</name>
        <dbReference type="ChEBI" id="CHEBI:49883"/>
        <label>1</label>
    </ligand>
</feature>
<feature type="binding site" evidence="2">
    <location>
        <position position="29"/>
    </location>
    <ligand>
        <name>[4Fe-4S] cluster</name>
        <dbReference type="ChEBI" id="CHEBI:49883"/>
        <label>1</label>
    </ligand>
</feature>
<feature type="binding site" evidence="2">
    <location>
        <position position="32"/>
    </location>
    <ligand>
        <name>[4Fe-4S] cluster</name>
        <dbReference type="ChEBI" id="CHEBI:49883"/>
        <label>1</label>
    </ligand>
</feature>
<feature type="binding site" evidence="2">
    <location>
        <position position="38"/>
    </location>
    <ligand>
        <name>[4Fe-4S] cluster</name>
        <dbReference type="ChEBI" id="CHEBI:49883"/>
        <label>1</label>
    </ligand>
</feature>
<feature type="binding site" evidence="2">
    <location>
        <begin position="68"/>
        <end position="75"/>
    </location>
    <ligand>
        <name>ATP</name>
        <dbReference type="ChEBI" id="CHEBI:30616"/>
    </ligand>
</feature>
<feature type="binding site" evidence="2">
    <location>
        <position position="243"/>
    </location>
    <ligand>
        <name>[4Fe-4S] cluster</name>
        <dbReference type="ChEBI" id="CHEBI:49883"/>
        <label>2</label>
        <note>ligand shared with heterodimeric partner</note>
    </ligand>
</feature>
<feature type="binding site" evidence="2">
    <location>
        <position position="246"/>
    </location>
    <ligand>
        <name>[4Fe-4S] cluster</name>
        <dbReference type="ChEBI" id="CHEBI:49883"/>
        <label>2</label>
        <note>ligand shared with heterodimeric partner</note>
    </ligand>
</feature>